<comment type="function">
    <text evidence="2 3">Regulatory subunit of the condensin-2 complex, a complex that seems to provide chromosomes with an additional level of organization and rigidity and in establishing mitotic chromosome architecture (By similarity). May promote the resolution of double-strand DNA catenanes (intertwines) between sister chromatids. Condensin-mediated compaction likely increases tension in catenated sister chromatids, providing directionality for type II topoisomerase-mediated strand exchanges toward chromatid decatenation. Required for decatenation of chromatin bridges at anaphase. Early in neurogenesis, may play an essential role to ensure accurate mitotic chromosome condensation in neuron stem cells, ultimately affecting neuron pool and cortex size (By similarity). Seems to have lineage-specific role in T-cell development (By similarity).</text>
</comment>
<comment type="subunit">
    <text evidence="1">Component of the condensin-2 complex, which contains the SMC2 and SMC4 heterodimer, and three non SMC subunits, NCAPG2, NCAPH2 and NCAPD3 that probably regulate the complex.</text>
</comment>
<comment type="subcellular location">
    <subcellularLocation>
        <location evidence="1">Nucleus</location>
    </subcellularLocation>
</comment>
<comment type="similarity">
    <text evidence="5">Belongs to the CND2 H2 (condensin-2 subunit 2) family.</text>
</comment>
<gene>
    <name type="primary">Ncaph2</name>
</gene>
<dbReference type="EMBL" id="BC097379">
    <property type="protein sequence ID" value="AAH97379.1"/>
    <property type="molecule type" value="mRNA"/>
</dbReference>
<dbReference type="RefSeq" id="NP_001020048.1">
    <property type="nucleotide sequence ID" value="NM_001024877.2"/>
</dbReference>
<dbReference type="SMR" id="Q4V8I2"/>
<dbReference type="FunCoup" id="Q4V8I2">
    <property type="interactions" value="2826"/>
</dbReference>
<dbReference type="STRING" id="10116.ENSRNOP00000073049"/>
<dbReference type="iPTMnet" id="Q4V8I2"/>
<dbReference type="PhosphoSitePlus" id="Q4V8I2"/>
<dbReference type="PaxDb" id="10116-ENSRNOP00000052664"/>
<dbReference type="GeneID" id="300149"/>
<dbReference type="KEGG" id="rno:300149"/>
<dbReference type="AGR" id="RGD:1565937"/>
<dbReference type="CTD" id="29781"/>
<dbReference type="RGD" id="1565937">
    <property type="gene designation" value="Ncaph2"/>
</dbReference>
<dbReference type="VEuPathDB" id="HostDB:ENSRNOG00000009598"/>
<dbReference type="eggNOG" id="KOG2359">
    <property type="taxonomic scope" value="Eukaryota"/>
</dbReference>
<dbReference type="InParanoid" id="Q4V8I2"/>
<dbReference type="OrthoDB" id="10038475at2759"/>
<dbReference type="Reactome" id="R-RNO-2299718">
    <property type="pathway name" value="Condensation of Prophase Chromosomes"/>
</dbReference>
<dbReference type="PRO" id="PR:Q4V8I2"/>
<dbReference type="Proteomes" id="UP000002494">
    <property type="component" value="Chromosome 7"/>
</dbReference>
<dbReference type="Bgee" id="ENSRNOG00000009598">
    <property type="expression patterns" value="Expressed in thymus and 19 other cell types or tissues"/>
</dbReference>
<dbReference type="ExpressionAtlas" id="Q4V8I2">
    <property type="expression patterns" value="baseline and differential"/>
</dbReference>
<dbReference type="GO" id="GO:0005694">
    <property type="term" value="C:chromosome"/>
    <property type="evidence" value="ECO:0000266"/>
    <property type="project" value="RGD"/>
</dbReference>
<dbReference type="GO" id="GO:0000793">
    <property type="term" value="C:condensed chromosome"/>
    <property type="evidence" value="ECO:0000266"/>
    <property type="project" value="RGD"/>
</dbReference>
<dbReference type="GO" id="GO:0000794">
    <property type="term" value="C:condensed nuclear chromosome"/>
    <property type="evidence" value="ECO:0000266"/>
    <property type="project" value="RGD"/>
</dbReference>
<dbReference type="GO" id="GO:0000796">
    <property type="term" value="C:condensin complex"/>
    <property type="evidence" value="ECO:0000266"/>
    <property type="project" value="RGD"/>
</dbReference>
<dbReference type="GO" id="GO:0005634">
    <property type="term" value="C:nucleus"/>
    <property type="evidence" value="ECO:0000266"/>
    <property type="project" value="RGD"/>
</dbReference>
<dbReference type="GO" id="GO:0003682">
    <property type="term" value="F:chromatin binding"/>
    <property type="evidence" value="ECO:0000318"/>
    <property type="project" value="GO_Central"/>
</dbReference>
<dbReference type="GO" id="GO:0051309">
    <property type="term" value="P:female meiosis chromosome separation"/>
    <property type="evidence" value="ECO:0000266"/>
    <property type="project" value="RGD"/>
</dbReference>
<dbReference type="GO" id="GO:0007143">
    <property type="term" value="P:female meiotic nuclear division"/>
    <property type="evidence" value="ECO:0000266"/>
    <property type="project" value="RGD"/>
</dbReference>
<dbReference type="GO" id="GO:0010032">
    <property type="term" value="P:meiotic chromosome condensation"/>
    <property type="evidence" value="ECO:0000266"/>
    <property type="project" value="RGD"/>
</dbReference>
<dbReference type="GO" id="GO:0007076">
    <property type="term" value="P:mitotic chromosome condensation"/>
    <property type="evidence" value="ECO:0000250"/>
    <property type="project" value="UniProtKB"/>
</dbReference>
<dbReference type="GO" id="GO:0051306">
    <property type="term" value="P:mitotic sister chromatid separation"/>
    <property type="evidence" value="ECO:0000266"/>
    <property type="project" value="RGD"/>
</dbReference>
<dbReference type="GO" id="GO:0051984">
    <property type="term" value="P:positive regulation of chromosome segregation"/>
    <property type="evidence" value="ECO:0000266"/>
    <property type="project" value="RGD"/>
</dbReference>
<dbReference type="GO" id="GO:1905820">
    <property type="term" value="P:positive regulation of chromosome separation"/>
    <property type="evidence" value="ECO:0000266"/>
    <property type="project" value="RGD"/>
</dbReference>
<dbReference type="GO" id="GO:0033077">
    <property type="term" value="P:T cell differentiation in thymus"/>
    <property type="evidence" value="ECO:0000266"/>
    <property type="project" value="RGD"/>
</dbReference>
<dbReference type="InterPro" id="IPR031737">
    <property type="entry name" value="CNDH2_C"/>
</dbReference>
<dbReference type="InterPro" id="IPR031719">
    <property type="entry name" value="H2_M"/>
</dbReference>
<dbReference type="InterPro" id="IPR009378">
    <property type="entry name" value="H2_N"/>
</dbReference>
<dbReference type="InterPro" id="IPR031739">
    <property type="entry name" value="Ncaph2"/>
</dbReference>
<dbReference type="PANTHER" id="PTHR14324">
    <property type="entry name" value="CONDENSIN-2 COMPLEX SUBUNIT H2"/>
    <property type="match status" value="1"/>
</dbReference>
<dbReference type="PANTHER" id="PTHR14324:SF3">
    <property type="entry name" value="CONDENSIN-2 COMPLEX SUBUNIT H2"/>
    <property type="match status" value="1"/>
</dbReference>
<dbReference type="Pfam" id="PF16858">
    <property type="entry name" value="CNDH2_C"/>
    <property type="match status" value="1"/>
</dbReference>
<dbReference type="Pfam" id="PF16869">
    <property type="entry name" value="CNDH2_M"/>
    <property type="match status" value="1"/>
</dbReference>
<dbReference type="Pfam" id="PF06278">
    <property type="entry name" value="CNDH2_N"/>
    <property type="match status" value="1"/>
</dbReference>
<evidence type="ECO:0000250" key="1"/>
<evidence type="ECO:0000250" key="2">
    <source>
        <dbReference type="UniProtKB" id="Q6IBW4"/>
    </source>
</evidence>
<evidence type="ECO:0000250" key="3">
    <source>
        <dbReference type="UniProtKB" id="Q8BSP2"/>
    </source>
</evidence>
<evidence type="ECO:0000256" key="4">
    <source>
        <dbReference type="SAM" id="MobiDB-lite"/>
    </source>
</evidence>
<evidence type="ECO:0000305" key="5"/>
<evidence type="ECO:0007744" key="6">
    <source>
    </source>
</evidence>
<proteinExistence type="evidence at protein level"/>
<keyword id="KW-0226">DNA condensation</keyword>
<keyword id="KW-0539">Nucleus</keyword>
<keyword id="KW-0597">Phosphoprotein</keyword>
<keyword id="KW-1185">Reference proteome</keyword>
<feature type="chain" id="PRO_0000326243" description="Condensin-2 complex subunit H2">
    <location>
        <begin position="1"/>
        <end position="554"/>
    </location>
</feature>
<feature type="region of interest" description="Disordered" evidence="4">
    <location>
        <begin position="154"/>
        <end position="296"/>
    </location>
</feature>
<feature type="compositionally biased region" description="Polar residues" evidence="4">
    <location>
        <begin position="179"/>
        <end position="191"/>
    </location>
</feature>
<feature type="compositionally biased region" description="Acidic residues" evidence="4">
    <location>
        <begin position="201"/>
        <end position="210"/>
    </location>
</feature>
<feature type="modified residue" description="Phosphoserine" evidence="2">
    <location>
        <position position="45"/>
    </location>
</feature>
<feature type="modified residue" description="Phosphoserine" evidence="6">
    <location>
        <position position="178"/>
    </location>
</feature>
<feature type="modified residue" description="Phosphoserine" evidence="3">
    <location>
        <position position="182"/>
    </location>
</feature>
<feature type="modified residue" description="Phosphoserine" evidence="6">
    <location>
        <position position="199"/>
    </location>
</feature>
<feature type="modified residue" description="Phosphoserine" evidence="6">
    <location>
        <position position="200"/>
    </location>
</feature>
<feature type="modified residue" description="Phosphoserine" evidence="2">
    <location>
        <position position="441"/>
    </location>
</feature>
<reference key="1">
    <citation type="journal article" date="2004" name="Genome Res.">
        <title>The status, quality, and expansion of the NIH full-length cDNA project: the Mammalian Gene Collection (MGC).</title>
        <authorList>
            <consortium name="The MGC Project Team"/>
        </authorList>
    </citation>
    <scope>NUCLEOTIDE SEQUENCE [LARGE SCALE MRNA]</scope>
    <source>
        <tissue>Placenta</tissue>
    </source>
</reference>
<reference key="2">
    <citation type="journal article" date="2012" name="Nat. Commun.">
        <title>Quantitative maps of protein phosphorylation sites across 14 different rat organs and tissues.</title>
        <authorList>
            <person name="Lundby A."/>
            <person name="Secher A."/>
            <person name="Lage K."/>
            <person name="Nordsborg N.B."/>
            <person name="Dmytriyev A."/>
            <person name="Lundby C."/>
            <person name="Olsen J.V."/>
        </authorList>
    </citation>
    <scope>PHOSPHORYLATION [LARGE SCALE ANALYSIS] AT SER-178; SER-199 AND SER-200</scope>
    <scope>IDENTIFICATION BY MASS SPECTROMETRY [LARGE SCALE ANALYSIS]</scope>
</reference>
<accession>Q4V8I2</accession>
<organism>
    <name type="scientific">Rattus norvegicus</name>
    <name type="common">Rat</name>
    <dbReference type="NCBI Taxonomy" id="10116"/>
    <lineage>
        <taxon>Eukaryota</taxon>
        <taxon>Metazoa</taxon>
        <taxon>Chordata</taxon>
        <taxon>Craniata</taxon>
        <taxon>Vertebrata</taxon>
        <taxon>Euteleostomi</taxon>
        <taxon>Mammalia</taxon>
        <taxon>Eutheria</taxon>
        <taxon>Euarchontoglires</taxon>
        <taxon>Glires</taxon>
        <taxon>Rodentia</taxon>
        <taxon>Myomorpha</taxon>
        <taxon>Muroidea</taxon>
        <taxon>Muridae</taxon>
        <taxon>Murinae</taxon>
        <taxon>Rattus</taxon>
    </lineage>
</organism>
<name>CNDH2_RAT</name>
<sequence>MNFIEAALLIQGSACVYSKKVEYLYSLVYQALDFISGKRRAKQLSLVQEDGSNRAVNSGTPCETEDEFLSLDDFPDSRANVDLKNDQASSELLIIPLLPMALVAPDEVEKSSNPLYSCQGEVLASRKDFRMNTCTPDPRGSFMLDPVGMCPVEPVDVHPMPRSQKDAEEAEEQPMAVSRNGSPVSVRSISQEPDGPALSSGDEDAEDVAELPEVALEPAEPRTSQQTAILPRRYMLRERQGAPEPASQPQETPDPWQSLDPFDSLDSKLFQKGKPYSVPPGVEEAPGQKRKRKGATKLQDFHQWYLDAYAEHPDGRRARRKGPSFADMEVLYWKHVKEQLETLQKLRRRKMTERWLPGAKQDLWPAEEERLEEPLEDLGVADDFLEAEEYVEESEGVMPREAAGLDAEAIPESLKYEELVRRNVELFIATSQKFIQETELSQRIRDWEDTIQPLLQEQEQHVPFDIHTYGDQLVSRFPQLNEWCPFAELVAGQPAFEVCRSMLASLQLANDYTVEITQQPGLEAAVDTMSLRLLTHQRAHMRFQTYAAPSMAQP</sequence>
<protein>
    <recommendedName>
        <fullName>Condensin-2 complex subunit H2</fullName>
    </recommendedName>
    <alternativeName>
        <fullName>Non-SMC condensin II complex subunit H2</fullName>
    </alternativeName>
</protein>